<keyword id="KW-0002">3D-structure</keyword>
<keyword id="KW-0903">Direct protein sequencing</keyword>
<keyword id="KW-1015">Disulfide bond</keyword>
<keyword id="KW-0274">FAD</keyword>
<keyword id="KW-0285">Flavoprotein</keyword>
<keyword id="KW-0496">Mitochondrion</keyword>
<keyword id="KW-0520">NAD</keyword>
<keyword id="KW-0560">Oxidoreductase</keyword>
<keyword id="KW-0676">Redox-active center</keyword>
<keyword id="KW-0809">Transit peptide</keyword>
<evidence type="ECO:0000250" key="1"/>
<evidence type="ECO:0000269" key="2">
    <source>
    </source>
</evidence>
<evidence type="ECO:0000269" key="3">
    <source>
    </source>
</evidence>
<evidence type="ECO:0000305" key="4"/>
<evidence type="ECO:0007829" key="5">
    <source>
        <dbReference type="PDB" id="1DXL"/>
    </source>
</evidence>
<feature type="transit peptide" description="Mitochondrion" evidence="3">
    <location>
        <begin position="1"/>
        <end position="31"/>
    </location>
</feature>
<feature type="chain" id="PRO_0000030299" description="Dihydrolipoyl dehydrogenase, mitochondrial">
    <location>
        <begin position="32"/>
        <end position="501"/>
    </location>
</feature>
<feature type="active site" description="Proton acceptor" evidence="1">
    <location>
        <position position="480"/>
    </location>
</feature>
<feature type="binding site" evidence="2">
    <location>
        <begin position="67"/>
        <end position="76"/>
    </location>
    <ligand>
        <name>FAD</name>
        <dbReference type="ChEBI" id="CHEBI:57692"/>
    </ligand>
</feature>
<feature type="binding site" evidence="1">
    <location>
        <position position="85"/>
    </location>
    <ligand>
        <name>FAD</name>
        <dbReference type="ChEBI" id="CHEBI:57692"/>
    </ligand>
</feature>
<feature type="binding site" evidence="2">
    <location>
        <position position="149"/>
    </location>
    <ligand>
        <name>FAD</name>
        <dbReference type="ChEBI" id="CHEBI:57692"/>
    </ligand>
</feature>
<feature type="binding site" evidence="1">
    <location>
        <begin position="178"/>
        <end position="180"/>
    </location>
    <ligand>
        <name>FAD</name>
        <dbReference type="ChEBI" id="CHEBI:57692"/>
    </ligand>
</feature>
<feature type="binding site" evidence="1">
    <location>
        <begin position="215"/>
        <end position="222"/>
    </location>
    <ligand>
        <name>NAD(+)</name>
        <dbReference type="ChEBI" id="CHEBI:57540"/>
    </ligand>
</feature>
<feature type="binding site" evidence="1">
    <location>
        <position position="238"/>
    </location>
    <ligand>
        <name>NAD(+)</name>
        <dbReference type="ChEBI" id="CHEBI:57540"/>
    </ligand>
</feature>
<feature type="binding site" evidence="1">
    <location>
        <position position="272"/>
    </location>
    <ligand>
        <name>NAD(+)</name>
        <dbReference type="ChEBI" id="CHEBI:57540"/>
    </ligand>
</feature>
<feature type="binding site" evidence="1">
    <location>
        <position position="307"/>
    </location>
    <ligand>
        <name>NAD(+)</name>
        <dbReference type="ChEBI" id="CHEBI:57540"/>
    </ligand>
</feature>
<feature type="binding site" evidence="2">
    <location>
        <position position="348"/>
    </location>
    <ligand>
        <name>FAD</name>
        <dbReference type="ChEBI" id="CHEBI:57692"/>
    </ligand>
</feature>
<feature type="binding site" evidence="2">
    <location>
        <begin position="354"/>
        <end position="357"/>
    </location>
    <ligand>
        <name>FAD</name>
        <dbReference type="ChEBI" id="CHEBI:57692"/>
    </ligand>
</feature>
<feature type="disulfide bond" description="Redox-active" evidence="2">
    <location>
        <begin position="76"/>
        <end position="81"/>
    </location>
</feature>
<feature type="strand" evidence="5">
    <location>
        <begin position="40"/>
        <end position="43"/>
    </location>
</feature>
<feature type="helix" evidence="5">
    <location>
        <begin position="47"/>
        <end position="58"/>
    </location>
</feature>
<feature type="strand" evidence="5">
    <location>
        <begin position="63"/>
        <end position="67"/>
    </location>
</feature>
<feature type="strand" evidence="5">
    <location>
        <begin position="69"/>
        <end position="72"/>
    </location>
</feature>
<feature type="helix" evidence="5">
    <location>
        <begin position="76"/>
        <end position="79"/>
    </location>
</feature>
<feature type="helix" evidence="5">
    <location>
        <begin position="81"/>
        <end position="99"/>
    </location>
</feature>
<feature type="helix" evidence="5">
    <location>
        <begin position="102"/>
        <end position="104"/>
    </location>
</feature>
<feature type="strand" evidence="5">
    <location>
        <begin position="106"/>
        <end position="109"/>
    </location>
</feature>
<feature type="strand" evidence="5">
    <location>
        <begin position="111"/>
        <end position="113"/>
    </location>
</feature>
<feature type="helix" evidence="5">
    <location>
        <begin position="115"/>
        <end position="140"/>
    </location>
</feature>
<feature type="strand" evidence="5">
    <location>
        <begin position="143"/>
        <end position="147"/>
    </location>
</feature>
<feature type="strand" evidence="5">
    <location>
        <begin position="149"/>
        <end position="153"/>
    </location>
</feature>
<feature type="strand" evidence="5">
    <location>
        <begin position="156"/>
        <end position="159"/>
    </location>
</feature>
<feature type="strand" evidence="5">
    <location>
        <begin position="162"/>
        <end position="164"/>
    </location>
</feature>
<feature type="strand" evidence="5">
    <location>
        <begin position="167"/>
        <end position="170"/>
    </location>
</feature>
<feature type="strand" evidence="5">
    <location>
        <begin position="172"/>
        <end position="176"/>
    </location>
</feature>
<feature type="strand" evidence="5">
    <location>
        <begin position="180"/>
        <end position="182"/>
    </location>
</feature>
<feature type="strand" evidence="5">
    <location>
        <begin position="192"/>
        <end position="196"/>
    </location>
</feature>
<feature type="helix" evidence="5">
    <location>
        <begin position="198"/>
        <end position="201"/>
    </location>
</feature>
<feature type="strand" evidence="5">
    <location>
        <begin position="209"/>
        <end position="214"/>
    </location>
</feature>
<feature type="helix" evidence="5">
    <location>
        <begin position="218"/>
        <end position="230"/>
    </location>
</feature>
<feature type="strand" evidence="5">
    <location>
        <begin position="233"/>
        <end position="237"/>
    </location>
</feature>
<feature type="strand" evidence="5">
    <location>
        <begin position="239"/>
        <end position="244"/>
    </location>
</feature>
<feature type="helix" evidence="5">
    <location>
        <begin position="249"/>
        <end position="261"/>
    </location>
</feature>
<feature type="strand" evidence="5">
    <location>
        <begin position="269"/>
        <end position="276"/>
    </location>
</feature>
<feature type="strand" evidence="5">
    <location>
        <begin position="278"/>
        <end position="291"/>
    </location>
</feature>
<feature type="strand" evidence="5">
    <location>
        <begin position="295"/>
        <end position="303"/>
    </location>
</feature>
<feature type="strand" evidence="5">
    <location>
        <begin position="308"/>
        <end position="310"/>
    </location>
</feature>
<feature type="turn" evidence="5">
    <location>
        <begin position="318"/>
        <end position="321"/>
    </location>
</feature>
<feature type="strand" evidence="5">
    <location>
        <begin position="326"/>
        <end position="328"/>
    </location>
</feature>
<feature type="strand" evidence="5">
    <location>
        <begin position="343"/>
        <end position="345"/>
    </location>
</feature>
<feature type="strand" evidence="5">
    <location>
        <begin position="350"/>
        <end position="352"/>
    </location>
</feature>
<feature type="helix" evidence="5">
    <location>
        <begin position="356"/>
        <end position="370"/>
    </location>
</feature>
<feature type="strand" evidence="5">
    <location>
        <begin position="384"/>
        <end position="386"/>
    </location>
</feature>
<feature type="strand" evidence="5">
    <location>
        <begin position="388"/>
        <end position="396"/>
    </location>
</feature>
<feature type="helix" evidence="5">
    <location>
        <begin position="399"/>
        <end position="404"/>
    </location>
</feature>
<feature type="strand" evidence="5">
    <location>
        <begin position="409"/>
        <end position="415"/>
    </location>
</feature>
<feature type="helix" evidence="5">
    <location>
        <begin position="416"/>
        <end position="418"/>
    </location>
</feature>
<feature type="helix" evidence="5">
    <location>
        <begin position="420"/>
        <end position="425"/>
    </location>
</feature>
<feature type="strand" evidence="5">
    <location>
        <begin position="431"/>
        <end position="437"/>
    </location>
</feature>
<feature type="turn" evidence="5">
    <location>
        <begin position="438"/>
        <end position="440"/>
    </location>
</feature>
<feature type="strand" evidence="5">
    <location>
        <begin position="442"/>
        <end position="450"/>
    </location>
</feature>
<feature type="helix" evidence="5">
    <location>
        <begin position="453"/>
        <end position="465"/>
    </location>
</feature>
<feature type="helix" evidence="5">
    <location>
        <begin position="470"/>
        <end position="474"/>
    </location>
</feature>
<feature type="helix" evidence="5">
    <location>
        <begin position="485"/>
        <end position="495"/>
    </location>
</feature>
<name>DLDH_PEA</name>
<protein>
    <recommendedName>
        <fullName>Dihydrolipoyl dehydrogenase, mitochondrial</fullName>
        <ecNumber>1.8.1.4</ecNumber>
    </recommendedName>
    <alternativeName>
        <fullName>Dihydrolipoamide dehydrogenase</fullName>
    </alternativeName>
    <alternativeName>
        <fullName>Glycine cleavage system L protein</fullName>
    </alternativeName>
    <alternativeName>
        <fullName>Pyruvate dehydrogenase complex E3 subunit</fullName>
        <shortName>E3</shortName>
        <shortName>PDC-E3</shortName>
    </alternativeName>
</protein>
<comment type="function">
    <text>Lipoamide dehydrogenase is a component of the glycine cleavage system as well as of the alpha-ketoacid dehydrogenase complexes. The pyruvate dehydrogenase complex contains multiple copies of three enzymatic components: pyruvate dehydrogenase (E1), dihydrolipoamide acetyltransferase (E2) and lipoamide dehydrogenase (E3).</text>
</comment>
<comment type="catalytic activity">
    <reaction>
        <text>N(6)-[(R)-dihydrolipoyl]-L-lysyl-[protein] + NAD(+) = N(6)-[(R)-lipoyl]-L-lysyl-[protein] + NADH + H(+)</text>
        <dbReference type="Rhea" id="RHEA:15045"/>
        <dbReference type="Rhea" id="RHEA-COMP:10474"/>
        <dbReference type="Rhea" id="RHEA-COMP:10475"/>
        <dbReference type="ChEBI" id="CHEBI:15378"/>
        <dbReference type="ChEBI" id="CHEBI:57540"/>
        <dbReference type="ChEBI" id="CHEBI:57945"/>
        <dbReference type="ChEBI" id="CHEBI:83099"/>
        <dbReference type="ChEBI" id="CHEBI:83100"/>
        <dbReference type="EC" id="1.8.1.4"/>
    </reaction>
</comment>
<comment type="cofactor">
    <cofactor>
        <name>FAD</name>
        <dbReference type="ChEBI" id="CHEBI:57692"/>
    </cofactor>
    <text>Binds 1 FAD per subunit.</text>
</comment>
<comment type="subunit">
    <text evidence="2">Homodimer.</text>
</comment>
<comment type="subcellular location">
    <subcellularLocation>
        <location>Mitochondrion matrix</location>
    </subcellularLocation>
</comment>
<comment type="mass spectrometry"/>
<comment type="miscellaneous">
    <text>The active site is a redox-active disulfide bond.</text>
</comment>
<comment type="similarity">
    <text evidence="4">Belongs to the class-I pyridine nucleotide-disulfide oxidoreductase family.</text>
</comment>
<accession>P31023</accession>
<organism>
    <name type="scientific">Pisum sativum</name>
    <name type="common">Garden pea</name>
    <name type="synonym">Lathyrus oleraceus</name>
    <dbReference type="NCBI Taxonomy" id="3888"/>
    <lineage>
        <taxon>Eukaryota</taxon>
        <taxon>Viridiplantae</taxon>
        <taxon>Streptophyta</taxon>
        <taxon>Embryophyta</taxon>
        <taxon>Tracheophyta</taxon>
        <taxon>Spermatophyta</taxon>
        <taxon>Magnoliopsida</taxon>
        <taxon>eudicotyledons</taxon>
        <taxon>Gunneridae</taxon>
        <taxon>Pentapetalae</taxon>
        <taxon>rosids</taxon>
        <taxon>fabids</taxon>
        <taxon>Fabales</taxon>
        <taxon>Fabaceae</taxon>
        <taxon>Papilionoideae</taxon>
        <taxon>50 kb inversion clade</taxon>
        <taxon>NPAAA clade</taxon>
        <taxon>Hologalegina</taxon>
        <taxon>IRL clade</taxon>
        <taxon>Fabeae</taxon>
        <taxon>Pisum</taxon>
    </lineage>
</organism>
<proteinExistence type="evidence at protein level"/>
<reference key="1">
    <citation type="journal article" date="1992" name="Eur. J. Biochem.">
        <title>Isolation, characterization, and sequence analysis of a cDNA clone encoding L-protein, the dihydrolipoamide dehydrogenase component of the glycine cleavage system from pea-leaf mitochondria.</title>
        <authorList>
            <person name="Bourguignon J."/>
            <person name="Macherel D."/>
            <person name="Neuburger M."/>
            <person name="Douce R."/>
        </authorList>
    </citation>
    <scope>NUCLEOTIDE SEQUENCE [MRNA]</scope>
    <source>
        <tissue>Leaf</tissue>
    </source>
</reference>
<reference key="2">
    <citation type="submission" date="2000-01" db="EMBL/GenBank/DDBJ databases">
        <authorList>
            <person name="Bourguignon J."/>
        </authorList>
    </citation>
    <scope>SEQUENCE REVISION TO 480</scope>
</reference>
<reference key="3">
    <citation type="journal article" date="1992" name="J. Biol. Chem.">
        <title>Purification and primary amino acid sequence of the L subunit of glycine decarboxylase. Evidence for a single lipoamide dehydrogenase in plant mitochondria.</title>
        <authorList>
            <person name="Turner S.R."/>
            <person name="Ireland R."/>
            <person name="Rawsthorne S."/>
        </authorList>
    </citation>
    <scope>NUCLEOTIDE SEQUENCE [MRNA]</scope>
    <source>
        <strain>cv. Birte</strain>
        <tissue>Leaf</tissue>
    </source>
</reference>
<reference key="4">
    <citation type="submission" date="1995-09" db="EMBL/GenBank/DDBJ databases">
        <authorList>
            <person name="Rawsthorne S."/>
        </authorList>
    </citation>
    <scope>SEQUENCE REVISION TO 499-501</scope>
</reference>
<reference key="5">
    <citation type="journal article" date="1996" name="Biochem. J.">
        <title>Glycine decarboxylase and pyruvate dehydrogenase complexes share the same dihydrolipoamide dehydrogenase in pea leaf mitochondria: evidence from mass spectrometry and primary-structure analysis.</title>
        <authorList>
            <person name="Bourguignon J."/>
            <person name="Merand V."/>
            <person name="Rawsthorne S."/>
            <person name="Forest E."/>
            <person name="Douce R."/>
        </authorList>
    </citation>
    <scope>PROTEIN SEQUENCE OF 32-61 AND 493-501</scope>
    <scope>MASS SPECTROMETRY</scope>
</reference>
<reference key="6">
    <citation type="journal article" date="2000" name="Eur. J. Biochem.">
        <title>Interaction between the lipoamide-containing H-protein and the lipoamide dehydrogenase (L-protein) of the glycine decarboxylase multienzyme system 2. Crystal structures of H- and L-proteins.</title>
        <authorList>
            <person name="Faure M."/>
            <person name="Bourguignon J."/>
            <person name="Neuburger M."/>
            <person name="MacHerel D."/>
            <person name="Sieker L."/>
            <person name="Ober R."/>
            <person name="Kahn R."/>
            <person name="Cohen-Addad C."/>
            <person name="Douce R."/>
        </authorList>
    </citation>
    <scope>X-RAY CRYSTALLOGRAPHY (3.15 ANGSTROMS) OF 32-501 IN COMPLEX WITH FAD</scope>
    <scope>SUBUNIT</scope>
    <scope>DISULFIDE BOND</scope>
</reference>
<reference key="7">
    <citation type="journal article" date="2000" name="Eur. J. Biochem.">
        <authorList>
            <person name="Faure M."/>
            <person name="Bourguignon J."/>
            <person name="Neuburger M."/>
            <person name="MacHerel D."/>
            <person name="Sieker L."/>
            <person name="Ober R."/>
            <person name="Kahn R."/>
            <person name="Cohen-Addad C."/>
            <person name="Douce R."/>
        </authorList>
    </citation>
    <scope>ERRATUM OF PUBMED:10806386</scope>
</reference>
<sequence>MAMANLARRKGYSLLSSETLRYSFSLRSRAFASGSDENDVVIIGGGPGGYVAAIKAAQLGFKTTCIEKRGALGGTCLNVGCIPSKALLHSSHMYHEAKHSFANHGVKVSNVEIDLAAMMGQKDKAVSNLTRGIEGLFKKNKVTYVKGYGKFVSPSEISVDTIEGENTVVKGKHIIIATGSDVKSLPGVTIDEKKIVSSTGALALSEIPKKLVVIGAGYIGLEMGSVWGRIGSEVTVVEFASEIVPTMDAEIRKQFQRSLEKQGMKFKLKTKVVGVDTSGDGVKLTVEPSAGGEQTIIEADVVLVSAGRTPFTSGLNLDKIGVETDKLGRILVNERFSTNVSGVYAIGDVIPGPMLAHKAEEDGVACVEYLAGKVGHVDYDKVPGVVYTNPEVASVGKTEEQVKETGVEYRVGKFPFMANSRAKAIDNAEGLVKIIAEKETDKILGVHIMAPNAGELIHEAAIALQYDASSEDIARVCHAHPTMSEAIKEAAMATYDKPIHI</sequence>
<dbReference type="EC" id="1.8.1.4"/>
<dbReference type="EMBL" id="X63464">
    <property type="protein sequence ID" value="CAA45066.2"/>
    <property type="molecule type" value="mRNA"/>
</dbReference>
<dbReference type="EMBL" id="X62995">
    <property type="protein sequence ID" value="CAA44729.1"/>
    <property type="molecule type" value="mRNA"/>
</dbReference>
<dbReference type="PIR" id="S22384">
    <property type="entry name" value="S22384"/>
</dbReference>
<dbReference type="PDB" id="1DXL">
    <property type="method" value="X-ray"/>
    <property type="resolution" value="3.15 A"/>
    <property type="chains" value="A/B/C/D=32-501"/>
</dbReference>
<dbReference type="PDBsum" id="1DXL"/>
<dbReference type="SMR" id="P31023"/>
<dbReference type="IntAct" id="P31023">
    <property type="interactions" value="1"/>
</dbReference>
<dbReference type="EnsemblPlants" id="Psat0s2692g0120.1">
    <property type="protein sequence ID" value="Psat0s2692g0120.1.cds"/>
    <property type="gene ID" value="Psat0s2692g0120"/>
</dbReference>
<dbReference type="Gramene" id="Psat0s2692g0120.1">
    <property type="protein sequence ID" value="Psat0s2692g0120.1.cds"/>
    <property type="gene ID" value="Psat0s2692g0120"/>
</dbReference>
<dbReference type="OrthoDB" id="361797at2759"/>
<dbReference type="BRENDA" id="1.2.1.104">
    <property type="organism ID" value="4872"/>
</dbReference>
<dbReference type="BRENDA" id="1.4.1.27">
    <property type="organism ID" value="4872"/>
</dbReference>
<dbReference type="SABIO-RK" id="P31023"/>
<dbReference type="EvolutionaryTrace" id="P31023"/>
<dbReference type="GO" id="GO:0005960">
    <property type="term" value="C:glycine cleavage complex"/>
    <property type="evidence" value="ECO:0000314"/>
    <property type="project" value="UniProtKB"/>
</dbReference>
<dbReference type="GO" id="GO:0005759">
    <property type="term" value="C:mitochondrial matrix"/>
    <property type="evidence" value="ECO:0000314"/>
    <property type="project" value="FlyBase"/>
</dbReference>
<dbReference type="GO" id="GO:0005739">
    <property type="term" value="C:mitochondrion"/>
    <property type="evidence" value="ECO:0000314"/>
    <property type="project" value="CACAO"/>
</dbReference>
<dbReference type="GO" id="GO:0045252">
    <property type="term" value="C:oxoglutarate dehydrogenase complex"/>
    <property type="evidence" value="ECO:0007669"/>
    <property type="project" value="TreeGrafter"/>
</dbReference>
<dbReference type="GO" id="GO:0004148">
    <property type="term" value="F:dihydrolipoyl dehydrogenase (NADH) activity"/>
    <property type="evidence" value="ECO:0000314"/>
    <property type="project" value="FlyBase"/>
</dbReference>
<dbReference type="GO" id="GO:0050660">
    <property type="term" value="F:flavin adenine dinucleotide binding"/>
    <property type="evidence" value="ECO:0007669"/>
    <property type="project" value="InterPro"/>
</dbReference>
<dbReference type="GO" id="GO:0006103">
    <property type="term" value="P:2-oxoglutarate metabolic process"/>
    <property type="evidence" value="ECO:0007669"/>
    <property type="project" value="TreeGrafter"/>
</dbReference>
<dbReference type="GO" id="GO:0019464">
    <property type="term" value="P:glycine decarboxylation via glycine cleavage system"/>
    <property type="evidence" value="ECO:0000314"/>
    <property type="project" value="FlyBase"/>
</dbReference>
<dbReference type="FunFam" id="3.30.390.30:FF:000001">
    <property type="entry name" value="Dihydrolipoyl dehydrogenase"/>
    <property type="match status" value="1"/>
</dbReference>
<dbReference type="FunFam" id="3.50.50.60:FF:000001">
    <property type="entry name" value="Dihydrolipoyl dehydrogenase, mitochondrial"/>
    <property type="match status" value="1"/>
</dbReference>
<dbReference type="Gene3D" id="3.30.390.30">
    <property type="match status" value="1"/>
</dbReference>
<dbReference type="Gene3D" id="3.50.50.60">
    <property type="entry name" value="FAD/NAD(P)-binding domain"/>
    <property type="match status" value="2"/>
</dbReference>
<dbReference type="InterPro" id="IPR050151">
    <property type="entry name" value="Class-I_Pyr_Nuc-Dis_Oxidored"/>
</dbReference>
<dbReference type="InterPro" id="IPR036188">
    <property type="entry name" value="FAD/NAD-bd_sf"/>
</dbReference>
<dbReference type="InterPro" id="IPR023753">
    <property type="entry name" value="FAD/NAD-binding_dom"/>
</dbReference>
<dbReference type="InterPro" id="IPR016156">
    <property type="entry name" value="FAD/NAD-linked_Rdtase_dimer_sf"/>
</dbReference>
<dbReference type="InterPro" id="IPR006258">
    <property type="entry name" value="Lipoamide_DH"/>
</dbReference>
<dbReference type="InterPro" id="IPR001100">
    <property type="entry name" value="Pyr_nuc-diS_OxRdtase"/>
</dbReference>
<dbReference type="InterPro" id="IPR004099">
    <property type="entry name" value="Pyr_nucl-diS_OxRdtase_dimer"/>
</dbReference>
<dbReference type="InterPro" id="IPR012999">
    <property type="entry name" value="Pyr_OxRdtase_I_AS"/>
</dbReference>
<dbReference type="NCBIfam" id="TIGR01350">
    <property type="entry name" value="lipoamide_DH"/>
    <property type="match status" value="1"/>
</dbReference>
<dbReference type="PANTHER" id="PTHR22912">
    <property type="entry name" value="DISULFIDE OXIDOREDUCTASE"/>
    <property type="match status" value="1"/>
</dbReference>
<dbReference type="PANTHER" id="PTHR22912:SF220">
    <property type="entry name" value="LEGHEMOGLOBIN REDUCTASE"/>
    <property type="match status" value="1"/>
</dbReference>
<dbReference type="Pfam" id="PF07992">
    <property type="entry name" value="Pyr_redox_2"/>
    <property type="match status" value="1"/>
</dbReference>
<dbReference type="Pfam" id="PF02852">
    <property type="entry name" value="Pyr_redox_dim"/>
    <property type="match status" value="1"/>
</dbReference>
<dbReference type="PIRSF" id="PIRSF000350">
    <property type="entry name" value="Mercury_reductase_MerA"/>
    <property type="match status" value="1"/>
</dbReference>
<dbReference type="PRINTS" id="PR00368">
    <property type="entry name" value="FADPNR"/>
</dbReference>
<dbReference type="PRINTS" id="PR00411">
    <property type="entry name" value="PNDRDTASEI"/>
</dbReference>
<dbReference type="SUPFAM" id="SSF51905">
    <property type="entry name" value="FAD/NAD(P)-binding domain"/>
    <property type="match status" value="1"/>
</dbReference>
<dbReference type="SUPFAM" id="SSF55424">
    <property type="entry name" value="FAD/NAD-linked reductases, dimerisation (C-terminal) domain"/>
    <property type="match status" value="1"/>
</dbReference>
<dbReference type="PROSITE" id="PS00076">
    <property type="entry name" value="PYRIDINE_REDOX_1"/>
    <property type="match status" value="1"/>
</dbReference>
<gene>
    <name type="primary">LPD</name>
</gene>